<geneLocation type="plasmid">
    <name>IncFII R100</name>
    <name>NR1</name>
</geneLocation>
<geneLocation type="plasmid">
    <name>IncFII R1</name>
</geneLocation>
<keyword id="KW-0235">DNA replication</keyword>
<keyword id="KW-0614">Plasmid</keyword>
<keyword id="KW-0615">Plasmid copy control</keyword>
<sequence>MTDLHQTYYRQVKNPNPVFTPREGAGTLKFCEKLMEKAVGFTSRFDFAIHVAHARSRGLRRRMPPVLRRRAIDALLQGLCFHYDPLANRVQCSITTLAIECGLATESAAGKLSITRATRALTFLSELGLITYQTEYDPLIGCYIPTDITFTSALFAALDVSEEAVAAARRSRVVWENKQRKKQGLDTLGMDELIAKAWRFVRERFRSYQTELKSRGIKRARARRDADRERQDIVTLVKRQLTREIAEGRFTANREAVKREVERRVKERMILSRNRNYSRLATASP</sequence>
<gene>
    <name type="primary">repA</name>
    <name type="synonym">repA1</name>
</gene>
<accession>P03066</accession>
<accession>Q47411</accession>
<name>REPA2_ECOLX</name>
<protein>
    <recommendedName>
        <fullName>Replication initiation protein</fullName>
    </recommendedName>
</protein>
<comment type="function">
    <text>This protein is essential for plasmid replication; it is involved in copy control functions.</text>
</comment>
<comment type="similarity">
    <text evidence="1">Belongs to the IncFII RepA family.</text>
</comment>
<comment type="sequence caution" evidence="1">
    <conflict type="erroneous initiation">
        <sequence resource="EMBL-CDS" id="CAA26169"/>
    </conflict>
</comment>
<organism>
    <name type="scientific">Escherichia coli</name>
    <dbReference type="NCBI Taxonomy" id="562"/>
    <lineage>
        <taxon>Bacteria</taxon>
        <taxon>Pseudomonadati</taxon>
        <taxon>Pseudomonadota</taxon>
        <taxon>Gammaproteobacteria</taxon>
        <taxon>Enterobacterales</taxon>
        <taxon>Enterobacteriaceae</taxon>
        <taxon>Escherichia</taxon>
    </lineage>
</organism>
<dbReference type="EMBL" id="J01762">
    <property type="protein sequence ID" value="AAA92257.1"/>
    <property type="molecule type" value="Genomic_DNA"/>
</dbReference>
<dbReference type="EMBL" id="J01770">
    <property type="status" value="NOT_ANNOTATED_CDS"/>
    <property type="molecule type" value="Genomic_DNA"/>
</dbReference>
<dbReference type="EMBL" id="X12587">
    <property type="protein sequence ID" value="CAA31100.1"/>
    <property type="molecule type" value="Genomic_DNA"/>
</dbReference>
<dbReference type="EMBL" id="X12776">
    <property type="protein sequence ID" value="CAA31263.1"/>
    <property type="molecule type" value="Genomic_DNA"/>
</dbReference>
<dbReference type="EMBL" id="X02302">
    <property type="protein sequence ID" value="CAA26168.1"/>
    <property type="molecule type" value="Genomic_DNA"/>
</dbReference>
<dbReference type="EMBL" id="X02302">
    <property type="protein sequence ID" value="CAA26169.1"/>
    <property type="status" value="ALT_INIT"/>
    <property type="molecule type" value="Genomic_DNA"/>
</dbReference>
<dbReference type="EMBL" id="M26840">
    <property type="protein sequence ID" value="AAA26067.1"/>
    <property type="molecule type" value="Genomic_DNA"/>
</dbReference>
<dbReference type="PIR" id="A03602">
    <property type="entry name" value="IDECRP"/>
</dbReference>
<dbReference type="PIR" id="I64780">
    <property type="entry name" value="I64780"/>
</dbReference>
<dbReference type="RefSeq" id="NP_957643.1">
    <property type="nucleotide sequence ID" value="NC_005327.1"/>
</dbReference>
<dbReference type="RefSeq" id="WP_000130646.1">
    <property type="nucleotide sequence ID" value="NZ_WVVN01000083.1"/>
</dbReference>
<dbReference type="RefSeq" id="YP_001096511.1">
    <property type="nucleotide sequence ID" value="NC_009133.1"/>
</dbReference>
<dbReference type="RefSeq" id="YP_004869998.1">
    <property type="nucleotide sequence ID" value="NC_016039.1"/>
</dbReference>
<dbReference type="RefSeq" id="YP_006952184.1">
    <property type="nucleotide sequence ID" value="NC_019057.1"/>
</dbReference>
<dbReference type="RefSeq" id="YP_006953267.1">
    <property type="nucleotide sequence ID" value="NC_019071.1"/>
</dbReference>
<dbReference type="RefSeq" id="YP_006953365.1">
    <property type="nucleotide sequence ID" value="NC_019072.1"/>
</dbReference>
<dbReference type="RefSeq" id="YP_006953887.1">
    <property type="nucleotide sequence ID" value="NC_019090.1"/>
</dbReference>
<dbReference type="RefSeq" id="YP_006954223.1">
    <property type="nucleotide sequence ID" value="NC_019095.1"/>
</dbReference>
<dbReference type="GO" id="GO:0006260">
    <property type="term" value="P:DNA replication"/>
    <property type="evidence" value="ECO:0007669"/>
    <property type="project" value="UniProtKB-KW"/>
</dbReference>
<dbReference type="GO" id="GO:0006276">
    <property type="term" value="P:plasmid maintenance"/>
    <property type="evidence" value="ECO:0007669"/>
    <property type="project" value="UniProtKB-KW"/>
</dbReference>
<dbReference type="InterPro" id="IPR017837">
    <property type="entry name" value="Plasmid_rep_init_RepA_IncFII"/>
</dbReference>
<dbReference type="InterPro" id="IPR003446">
    <property type="entry name" value="Plasmid_replication_init_RepA"/>
</dbReference>
<dbReference type="NCBIfam" id="TIGR03474">
    <property type="entry name" value="incFII_RepA"/>
    <property type="match status" value="1"/>
</dbReference>
<dbReference type="NCBIfam" id="NF010313">
    <property type="entry name" value="PRK13750.1"/>
    <property type="match status" value="1"/>
</dbReference>
<dbReference type="NCBIfam" id="NF040977">
    <property type="entry name" value="RepA_IncFII_LM"/>
    <property type="match status" value="1"/>
</dbReference>
<dbReference type="Pfam" id="PF02387">
    <property type="entry name" value="IncFII_repA"/>
    <property type="match status" value="1"/>
</dbReference>
<reference key="1">
    <citation type="journal article" date="1980" name="Mol. Gen. Genet.">
        <title>Genes and sites involved in replication and incompatibility of an R100 plasmid derivative based on nucleotide sequence analysis.</title>
        <authorList>
            <person name="Rosen J."/>
            <person name="Ryder T."/>
            <person name="Inokuchi H."/>
            <person name="Ohtsubo H."/>
            <person name="Ohtsubo E."/>
        </authorList>
    </citation>
    <scope>NUCLEOTIDE SEQUENCE [GENOMIC DNA]</scope>
    <source>
        <plasmid>IncFII R100 (NR1)</plasmid>
    </source>
</reference>
<reference key="2">
    <citation type="journal article" date="1981" name="Nature">
        <title>Role of RNA transcripts in replication incompatibility and copy number control in antibiotic resistance plasmid derivatives.</title>
        <authorList>
            <person name="Rosen J."/>
            <person name="Ryder T."/>
            <person name="Ohtsubo H."/>
            <person name="Ohtsubo E."/>
        </authorList>
    </citation>
    <scope>NUCLEOTIDE SEQUENCE [GENOMIC DNA] OF 1-77</scope>
    <source>
        <plasmid>IncFII R1</plasmid>
        <plasmid>IncFII R100 (NR1)</plasmid>
    </source>
</reference>
<reference key="3">
    <citation type="journal article" date="1988" name="Nucleic Acids Res.">
        <title>RepA protein- and oriR-dependent initiation of R1 plasmid replication: identification of a rho-dependent transcription terminator required for cis-action of repA protein.</title>
        <authorList>
            <person name="Masai H."/>
            <person name="Arai K."/>
        </authorList>
    </citation>
    <scope>NUCLEOTIDE SEQUENCE [GENOMIC DNA] OF 270-285</scope>
    <source>
        <plasmid>IncFII R1</plasmid>
    </source>
</reference>
<reference key="4">
    <citation type="journal article" date="1988" name="J. Mol. Biol.">
        <title>In-vivo studies on the cis-acting replication initiator protein of IncFII plasmid NR1.</title>
        <authorList>
            <person name="Dong X."/>
            <person name="Womble D.D."/>
            <person name="Rownd R.H."/>
        </authorList>
    </citation>
    <scope>NUCLEOTIDE SEQUENCE [GENOMIC DNA]</scope>
    <source>
        <plasmid>IncFII R100 (NR1)</plasmid>
    </source>
</reference>
<reference key="5">
    <citation type="journal article" date="1985" name="J. Mol. Biol.">
        <title>Transcription of the replication control region of the IncFII R-plasmid NR1 in vitro and in vivo.</title>
        <authorList>
            <person name="Womble D.D."/>
            <person name="Sampathkumar P."/>
            <person name="Easton A.M."/>
            <person name="Luckow V.A."/>
            <person name="Rownd R.H."/>
        </authorList>
    </citation>
    <scope>NUCLEOTIDE SEQUENCE [GENOMIC DNA]</scope>
    <source>
        <plasmid>IncFII R100 (NR1)</plasmid>
    </source>
</reference>
<reference key="6">
    <citation type="journal article" date="1986" name="Adv. Biophys.">
        <title>DNA replication of the resistance plasmid R100 and its control.</title>
        <authorList>
            <person name="Ohtsubo H."/>
            <person name="Ryder T.B."/>
            <person name="Maeda Y."/>
            <person name="Armstrong K."/>
            <person name="Ohtsubo E."/>
        </authorList>
    </citation>
    <scope>NUCLEOTIDE SEQUENCE [GENOMIC DNA]</scope>
    <source>
        <plasmid>IncFII R100 (NR1)</plasmid>
    </source>
</reference>
<reference key="7">
    <citation type="journal article" date="1987" name="J. Bacteriol.">
        <title>Transcriptional pausing in a region important for plasmid NR1 replication control.</title>
        <authorList>
            <person name="Dong X.N."/>
            <person name="Womble D.D."/>
            <person name="Rownd R.H."/>
        </authorList>
    </citation>
    <scope>NUCLEOTIDE SEQUENCE [GENOMIC DNA] OF 1-50</scope>
    <source>
        <plasmid>IncFII R100 (NR1)</plasmid>
    </source>
</reference>
<reference key="8">
    <citation type="journal article" date="1993" name="J. Bacteriol.">
        <title>Insertion and deletion mutations in the repA4 region of the IncFII plasmid NR1 cause unstable inheritance.</title>
        <authorList>
            <person name="Jiang T."/>
            <person name="Min Y.-N."/>
            <person name="Liu W."/>
            <person name="Womble D.D."/>
            <person name="Rownd R.H."/>
        </authorList>
    </citation>
    <scope>NUCLEOTIDE SEQUENCE [GENOMIC DNA] OF 252-285</scope>
    <source>
        <plasmid>IncFII R100 (NR1)</plasmid>
    </source>
</reference>
<evidence type="ECO:0000305" key="1"/>
<proteinExistence type="inferred from homology"/>
<feature type="chain" id="PRO_0000216226" description="Replication initiation protein">
    <location>
        <begin position="1"/>
        <end position="285"/>
    </location>
</feature>
<feature type="sequence conflict" description="In Ref. 6; AAA26067." evidence="1" ref="6">
    <original>R</original>
    <variation>H</variation>
    <location>
        <position position="55"/>
    </location>
</feature>